<feature type="chain" id="PRO_0000361140" description="Putative S-adenosyl-L-methionine-dependent methyltransferase Mb0853">
    <location>
        <begin position="1"/>
        <end position="301"/>
    </location>
</feature>
<feature type="binding site" evidence="1">
    <location>
        <position position="127"/>
    </location>
    <ligand>
        <name>S-adenosyl-L-methionine</name>
        <dbReference type="ChEBI" id="CHEBI:59789"/>
    </ligand>
</feature>
<feature type="binding site" evidence="1">
    <location>
        <begin position="156"/>
        <end position="157"/>
    </location>
    <ligand>
        <name>S-adenosyl-L-methionine</name>
        <dbReference type="ChEBI" id="CHEBI:59789"/>
    </ligand>
</feature>
<name>Y853_MYCBO</name>
<dbReference type="EC" id="2.1.1.-"/>
<dbReference type="EMBL" id="LT708304">
    <property type="protein sequence ID" value="SIT99452.1"/>
    <property type="molecule type" value="Genomic_DNA"/>
</dbReference>
<dbReference type="RefSeq" id="NP_854511.1">
    <property type="nucleotide sequence ID" value="NC_002945.3"/>
</dbReference>
<dbReference type="RefSeq" id="WP_003404349.1">
    <property type="nucleotide sequence ID" value="NC_002945.4"/>
</dbReference>
<dbReference type="SMR" id="Q7U163"/>
<dbReference type="KEGG" id="mbo:BQ2027_MB0853"/>
<dbReference type="PATRIC" id="fig|233413.5.peg.926"/>
<dbReference type="Proteomes" id="UP000001419">
    <property type="component" value="Chromosome"/>
</dbReference>
<dbReference type="GO" id="GO:0008168">
    <property type="term" value="F:methyltransferase activity"/>
    <property type="evidence" value="ECO:0007669"/>
    <property type="project" value="UniProtKB-KW"/>
</dbReference>
<dbReference type="GO" id="GO:0032259">
    <property type="term" value="P:methylation"/>
    <property type="evidence" value="ECO:0007669"/>
    <property type="project" value="UniProtKB-KW"/>
</dbReference>
<dbReference type="FunFam" id="3.40.50.150:FF:000152">
    <property type="entry name" value="S-adenosyl-L-methionine-dependent methyltransferase"/>
    <property type="match status" value="1"/>
</dbReference>
<dbReference type="Gene3D" id="3.40.50.150">
    <property type="entry name" value="Vaccinia Virus protein VP39"/>
    <property type="match status" value="1"/>
</dbReference>
<dbReference type="InterPro" id="IPR007213">
    <property type="entry name" value="Ppm1/Ppm2/Tcmp"/>
</dbReference>
<dbReference type="InterPro" id="IPR029063">
    <property type="entry name" value="SAM-dependent_MTases_sf"/>
</dbReference>
<dbReference type="InterPro" id="IPR011610">
    <property type="entry name" value="SAM_mthyl_Trfase_ML2640-like"/>
</dbReference>
<dbReference type="NCBIfam" id="TIGR00027">
    <property type="entry name" value="mthyl_TIGR00027"/>
    <property type="match status" value="1"/>
</dbReference>
<dbReference type="PANTHER" id="PTHR43619">
    <property type="entry name" value="S-ADENOSYL-L-METHIONINE-DEPENDENT METHYLTRANSFERASE YKTD-RELATED"/>
    <property type="match status" value="1"/>
</dbReference>
<dbReference type="PANTHER" id="PTHR43619:SF2">
    <property type="entry name" value="S-ADENOSYL-L-METHIONINE-DEPENDENT METHYLTRANSFERASES SUPERFAMILY PROTEIN"/>
    <property type="match status" value="1"/>
</dbReference>
<dbReference type="Pfam" id="PF04072">
    <property type="entry name" value="LCM"/>
    <property type="match status" value="1"/>
</dbReference>
<dbReference type="SUPFAM" id="SSF53335">
    <property type="entry name" value="S-adenosyl-L-methionine-dependent methyltransferases"/>
    <property type="match status" value="1"/>
</dbReference>
<reference key="1">
    <citation type="journal article" date="2003" name="Proc. Natl. Acad. Sci. U.S.A.">
        <title>The complete genome sequence of Mycobacterium bovis.</title>
        <authorList>
            <person name="Garnier T."/>
            <person name="Eiglmeier K."/>
            <person name="Camus J.-C."/>
            <person name="Medina N."/>
            <person name="Mansoor H."/>
            <person name="Pryor M."/>
            <person name="Duthoy S."/>
            <person name="Grondin S."/>
            <person name="Lacroix C."/>
            <person name="Monsempe C."/>
            <person name="Simon S."/>
            <person name="Harris B."/>
            <person name="Atkin R."/>
            <person name="Doggett J."/>
            <person name="Mayes R."/>
            <person name="Keating L."/>
            <person name="Wheeler P.R."/>
            <person name="Parkhill J."/>
            <person name="Barrell B.G."/>
            <person name="Cole S.T."/>
            <person name="Gordon S.V."/>
            <person name="Hewinson R.G."/>
        </authorList>
    </citation>
    <scope>NUCLEOTIDE SEQUENCE [LARGE SCALE GENOMIC DNA]</scope>
    <source>
        <strain>ATCC BAA-935 / AF2122/97</strain>
    </source>
</reference>
<reference key="2">
    <citation type="journal article" date="2017" name="Genome Announc.">
        <title>Updated reference genome sequence and annotation of Mycobacterium bovis AF2122/97.</title>
        <authorList>
            <person name="Malone K.M."/>
            <person name="Farrell D."/>
            <person name="Stuber T.P."/>
            <person name="Schubert O.T."/>
            <person name="Aebersold R."/>
            <person name="Robbe-Austerman S."/>
            <person name="Gordon S.V."/>
        </authorList>
    </citation>
    <scope>NUCLEOTIDE SEQUENCE [LARGE SCALE GENOMIC DNA]</scope>
    <scope>GENOME REANNOTATION</scope>
    <source>
        <strain>ATCC BAA-935 / AF2122/97</strain>
    </source>
</reference>
<sequence>MVRADRDRWDLATSVGATATMVAAQRALAADPRYALIDDPYAAPLVRAVGMDVYTRLVDWQIPVEGDSEFDPQRMATGMACRTRFFDQFFLDATHSGIGQFVILASGLDARAYRLAWPVGSIVYEVDMPEVIEFKTATLSDLGAEPATERRTVAVDLRDDWATALQTAGFDPKVPAAWSAEGLLVYLPVEAQDALFDNITALSAPGSRLAFEFVPDTAIFADERWRNYHNRMSELGFDIDLNELVYHGQRGHVLDYLTRDGWQTSALTVTQLYEANGFAYPDDELATAFADLTYSSATLMR</sequence>
<proteinExistence type="inferred from homology"/>
<evidence type="ECO:0000250" key="1"/>
<evidence type="ECO:0000305" key="2"/>
<gene>
    <name type="ordered locus">BQ2027_MB0853</name>
</gene>
<accession>Q7U163</accession>
<accession>A0A1R3XYN1</accession>
<accession>X2BG66</accession>
<comment type="function">
    <text evidence="1">Exhibits S-adenosyl-L-methionine-dependent methyltransferase activity.</text>
</comment>
<comment type="similarity">
    <text evidence="2">Belongs to the UPF0677 family.</text>
</comment>
<organism>
    <name type="scientific">Mycobacterium bovis (strain ATCC BAA-935 / AF2122/97)</name>
    <dbReference type="NCBI Taxonomy" id="233413"/>
    <lineage>
        <taxon>Bacteria</taxon>
        <taxon>Bacillati</taxon>
        <taxon>Actinomycetota</taxon>
        <taxon>Actinomycetes</taxon>
        <taxon>Mycobacteriales</taxon>
        <taxon>Mycobacteriaceae</taxon>
        <taxon>Mycobacterium</taxon>
        <taxon>Mycobacterium tuberculosis complex</taxon>
    </lineage>
</organism>
<keyword id="KW-0489">Methyltransferase</keyword>
<keyword id="KW-1185">Reference proteome</keyword>
<keyword id="KW-0949">S-adenosyl-L-methionine</keyword>
<keyword id="KW-0808">Transferase</keyword>
<protein>
    <recommendedName>
        <fullName>Putative S-adenosyl-L-methionine-dependent methyltransferase Mb0853</fullName>
        <ecNumber>2.1.1.-</ecNumber>
    </recommendedName>
</protein>